<organism>
    <name type="scientific">Escherichia coli O7:K1 (strain IAI39 / ExPEC)</name>
    <dbReference type="NCBI Taxonomy" id="585057"/>
    <lineage>
        <taxon>Bacteria</taxon>
        <taxon>Pseudomonadati</taxon>
        <taxon>Pseudomonadota</taxon>
        <taxon>Gammaproteobacteria</taxon>
        <taxon>Enterobacterales</taxon>
        <taxon>Enterobacteriaceae</taxon>
        <taxon>Escherichia</taxon>
    </lineage>
</organism>
<reference key="1">
    <citation type="journal article" date="2009" name="PLoS Genet.">
        <title>Organised genome dynamics in the Escherichia coli species results in highly diverse adaptive paths.</title>
        <authorList>
            <person name="Touchon M."/>
            <person name="Hoede C."/>
            <person name="Tenaillon O."/>
            <person name="Barbe V."/>
            <person name="Baeriswyl S."/>
            <person name="Bidet P."/>
            <person name="Bingen E."/>
            <person name="Bonacorsi S."/>
            <person name="Bouchier C."/>
            <person name="Bouvet O."/>
            <person name="Calteau A."/>
            <person name="Chiapello H."/>
            <person name="Clermont O."/>
            <person name="Cruveiller S."/>
            <person name="Danchin A."/>
            <person name="Diard M."/>
            <person name="Dossat C."/>
            <person name="Karoui M.E."/>
            <person name="Frapy E."/>
            <person name="Garry L."/>
            <person name="Ghigo J.M."/>
            <person name="Gilles A.M."/>
            <person name="Johnson J."/>
            <person name="Le Bouguenec C."/>
            <person name="Lescat M."/>
            <person name="Mangenot S."/>
            <person name="Martinez-Jehanne V."/>
            <person name="Matic I."/>
            <person name="Nassif X."/>
            <person name="Oztas S."/>
            <person name="Petit M.A."/>
            <person name="Pichon C."/>
            <person name="Rouy Z."/>
            <person name="Ruf C.S."/>
            <person name="Schneider D."/>
            <person name="Tourret J."/>
            <person name="Vacherie B."/>
            <person name="Vallenet D."/>
            <person name="Medigue C."/>
            <person name="Rocha E.P.C."/>
            <person name="Denamur E."/>
        </authorList>
    </citation>
    <scope>NUCLEOTIDE SEQUENCE [LARGE SCALE GENOMIC DNA]</scope>
    <source>
        <strain>IAI39 / ExPEC</strain>
    </source>
</reference>
<accession>B7NLX4</accession>
<feature type="chain" id="PRO_1000189605" description="Apo-citrate lyase phosphoribosyl-dephospho-CoA transferase">
    <location>
        <begin position="1"/>
        <end position="183"/>
    </location>
</feature>
<evidence type="ECO:0000255" key="1">
    <source>
        <dbReference type="HAMAP-Rule" id="MF_00398"/>
    </source>
</evidence>
<sequence>MHLLPELASHHAVSIPELLVSRDERQARQHAWLKRHPVPLVSFTVVAPGPIKDSEVTRRIFNHGVTALRALAAKQGWQIQEQAALVSASGPEGMLSIAAPARDLKLATIELEHNHPLGRLWDIDVLTPEGDILSRRDYSLPPRRCLLCEQSAAVCARGKTHQLTDLLNRMEALLNDVDACNVN</sequence>
<keyword id="KW-0548">Nucleotidyltransferase</keyword>
<keyword id="KW-0808">Transferase</keyword>
<proteinExistence type="inferred from homology"/>
<gene>
    <name evidence="1" type="primary">citX</name>
    <name type="ordered locus">ECIAI39_0590</name>
</gene>
<dbReference type="EC" id="2.7.7.61" evidence="1"/>
<dbReference type="EMBL" id="CU928164">
    <property type="protein sequence ID" value="CAR16727.1"/>
    <property type="molecule type" value="Genomic_DNA"/>
</dbReference>
<dbReference type="RefSeq" id="WP_000550406.1">
    <property type="nucleotide sequence ID" value="NC_011750.1"/>
</dbReference>
<dbReference type="RefSeq" id="YP_002406616.1">
    <property type="nucleotide sequence ID" value="NC_011750.1"/>
</dbReference>
<dbReference type="SMR" id="B7NLX4"/>
<dbReference type="STRING" id="585057.ECIAI39_0590"/>
<dbReference type="KEGG" id="ect:ECIAI39_0590"/>
<dbReference type="PATRIC" id="fig|585057.6.peg.627"/>
<dbReference type="HOGENOM" id="CLU_104529_1_1_6"/>
<dbReference type="Proteomes" id="UP000000749">
    <property type="component" value="Chromosome"/>
</dbReference>
<dbReference type="GO" id="GO:0050519">
    <property type="term" value="F:holo-citrate lyase synthase activity"/>
    <property type="evidence" value="ECO:0007669"/>
    <property type="project" value="UniProtKB-UniRule"/>
</dbReference>
<dbReference type="GO" id="GO:0051191">
    <property type="term" value="P:prosthetic group biosynthetic process"/>
    <property type="evidence" value="ECO:0007669"/>
    <property type="project" value="InterPro"/>
</dbReference>
<dbReference type="HAMAP" id="MF_00398">
    <property type="entry name" value="CitX"/>
    <property type="match status" value="1"/>
</dbReference>
<dbReference type="InterPro" id="IPR005551">
    <property type="entry name" value="CitX"/>
</dbReference>
<dbReference type="NCBIfam" id="TIGR03124">
    <property type="entry name" value="citrate_citX"/>
    <property type="match status" value="1"/>
</dbReference>
<dbReference type="NCBIfam" id="NF002383">
    <property type="entry name" value="PRK01392.1"/>
    <property type="match status" value="1"/>
</dbReference>
<dbReference type="Pfam" id="PF03802">
    <property type="entry name" value="CitX"/>
    <property type="match status" value="1"/>
</dbReference>
<name>CITX_ECO7I</name>
<comment type="function">
    <text evidence="1">Transfers 2-(5''-triphosphoribosyl)-3'-dephosphocoenzyme-A on a serine residue to the apo-acyl carrier protein (gamma chain) of the citrate lyase to yield holo-acyl carrier protein.</text>
</comment>
<comment type="catalytic activity">
    <reaction evidence="1">
        <text>apo-[citrate lyase ACP] + 2'-(5''-triphospho-alpha-D-ribosyl)-3'-dephospho-CoA = holo-[citrate lyase ACP] + diphosphate</text>
        <dbReference type="Rhea" id="RHEA:16333"/>
        <dbReference type="Rhea" id="RHEA-COMP:10157"/>
        <dbReference type="Rhea" id="RHEA-COMP:10158"/>
        <dbReference type="ChEBI" id="CHEBI:29999"/>
        <dbReference type="ChEBI" id="CHEBI:33019"/>
        <dbReference type="ChEBI" id="CHEBI:61378"/>
        <dbReference type="ChEBI" id="CHEBI:82683"/>
        <dbReference type="EC" id="2.7.7.61"/>
    </reaction>
</comment>
<comment type="similarity">
    <text evidence="1">Belongs to the CitX family.</text>
</comment>
<protein>
    <recommendedName>
        <fullName>Apo-citrate lyase phosphoribosyl-dephospho-CoA transferase</fullName>
        <ecNumber evidence="1">2.7.7.61</ecNumber>
    </recommendedName>
    <alternativeName>
        <fullName evidence="1">Apo-ACP nucleodityltransferase</fullName>
    </alternativeName>
    <alternativeName>
        <fullName evidence="1">Holo-ACP synthase</fullName>
    </alternativeName>
    <alternativeName>
        <fullName evidence="1">Holo-citrate lyase synthase</fullName>
    </alternativeName>
</protein>